<proteinExistence type="evidence at protein level"/>
<organism>
    <name type="scientific">Homo sapiens</name>
    <name type="common">Human</name>
    <dbReference type="NCBI Taxonomy" id="9606"/>
    <lineage>
        <taxon>Eukaryota</taxon>
        <taxon>Metazoa</taxon>
        <taxon>Chordata</taxon>
        <taxon>Craniata</taxon>
        <taxon>Vertebrata</taxon>
        <taxon>Euteleostomi</taxon>
        <taxon>Mammalia</taxon>
        <taxon>Eutheria</taxon>
        <taxon>Euarchontoglires</taxon>
        <taxon>Primates</taxon>
        <taxon>Haplorrhini</taxon>
        <taxon>Catarrhini</taxon>
        <taxon>Hominidae</taxon>
        <taxon>Homo</taxon>
    </lineage>
</organism>
<gene>
    <name type="primary">SCML2</name>
</gene>
<keyword id="KW-0002">3D-structure</keyword>
<keyword id="KW-0025">Alternative splicing</keyword>
<keyword id="KW-1017">Isopeptide bond</keyword>
<keyword id="KW-0539">Nucleus</keyword>
<keyword id="KW-0597">Phosphoprotein</keyword>
<keyword id="KW-1267">Proteomics identification</keyword>
<keyword id="KW-1185">Reference proteome</keyword>
<keyword id="KW-0677">Repeat</keyword>
<keyword id="KW-0678">Repressor</keyword>
<keyword id="KW-0804">Transcription</keyword>
<keyword id="KW-0805">Transcription regulation</keyword>
<keyword id="KW-0832">Ubl conjugation</keyword>
<dbReference type="EMBL" id="Y18004">
    <property type="protein sequence ID" value="CAB38943.1"/>
    <property type="molecule type" value="mRNA"/>
</dbReference>
<dbReference type="EMBL" id="AL833937">
    <property type="protein sequence ID" value="CAD38792.1"/>
    <property type="molecule type" value="mRNA"/>
</dbReference>
<dbReference type="EMBL" id="AL096763">
    <property type="status" value="NOT_ANNOTATED_CDS"/>
    <property type="molecule type" value="Genomic_DNA"/>
</dbReference>
<dbReference type="EMBL" id="AL031007">
    <property type="status" value="NOT_ANNOTATED_CDS"/>
    <property type="molecule type" value="Genomic_DNA"/>
</dbReference>
<dbReference type="EMBL" id="Z93023">
    <property type="status" value="NOT_ANNOTATED_CDS"/>
    <property type="molecule type" value="Genomic_DNA"/>
</dbReference>
<dbReference type="EMBL" id="BC040497">
    <property type="status" value="NOT_ANNOTATED_CDS"/>
    <property type="molecule type" value="mRNA"/>
</dbReference>
<dbReference type="EMBL" id="CH471074">
    <property type="protein sequence ID" value="EAW98937.1"/>
    <property type="molecule type" value="Genomic_DNA"/>
</dbReference>
<dbReference type="EMBL" id="BC051913">
    <property type="protein sequence ID" value="AAH51913.1"/>
    <property type="status" value="ALT_INIT"/>
    <property type="molecule type" value="mRNA"/>
</dbReference>
<dbReference type="EMBL" id="BC064617">
    <property type="protein sequence ID" value="AAH64617.1"/>
    <property type="molecule type" value="mRNA"/>
</dbReference>
<dbReference type="CCDS" id="CCDS14185.1">
    <molecule id="Q9UQR0-1"/>
</dbReference>
<dbReference type="RefSeq" id="NP_006080.1">
    <molecule id="Q9UQR0-1"/>
    <property type="nucleotide sequence ID" value="NM_006089.3"/>
</dbReference>
<dbReference type="RefSeq" id="XP_016884708.1">
    <molecule id="Q9UQR0-1"/>
    <property type="nucleotide sequence ID" value="XM_017029219.2"/>
</dbReference>
<dbReference type="RefSeq" id="XP_016884709.1">
    <molecule id="Q9UQR0-1"/>
    <property type="nucleotide sequence ID" value="XM_017029220.3"/>
</dbReference>
<dbReference type="RefSeq" id="XP_054182340.1">
    <molecule id="Q9UQR0-1"/>
    <property type="nucleotide sequence ID" value="XM_054326365.1"/>
</dbReference>
<dbReference type="RefSeq" id="XP_054182341.1">
    <molecule id="Q9UQR0-1"/>
    <property type="nucleotide sequence ID" value="XM_054326366.1"/>
</dbReference>
<dbReference type="PDB" id="1OI1">
    <property type="method" value="X-ray"/>
    <property type="resolution" value="1.78 A"/>
    <property type="chains" value="A=24-243"/>
</dbReference>
<dbReference type="PDB" id="2BIV">
    <property type="method" value="X-ray"/>
    <property type="resolution" value="1.70 A"/>
    <property type="chains" value="A/B/C=1-243"/>
</dbReference>
<dbReference type="PDB" id="2MEM">
    <property type="method" value="NMR"/>
    <property type="chains" value="A=354-468"/>
</dbReference>
<dbReference type="PDB" id="2VYT">
    <property type="method" value="X-ray"/>
    <property type="resolution" value="1.90 A"/>
    <property type="chains" value="A/B=24-243"/>
</dbReference>
<dbReference type="PDB" id="4EDU">
    <property type="method" value="X-ray"/>
    <property type="resolution" value="2.58 A"/>
    <property type="chains" value="A=29-243"/>
</dbReference>
<dbReference type="PDBsum" id="1OI1"/>
<dbReference type="PDBsum" id="2BIV"/>
<dbReference type="PDBsum" id="2MEM"/>
<dbReference type="PDBsum" id="2VYT"/>
<dbReference type="PDBsum" id="4EDU"/>
<dbReference type="BMRB" id="Q9UQR0"/>
<dbReference type="SMR" id="Q9UQR0"/>
<dbReference type="BioGRID" id="115661">
    <property type="interactions" value="80"/>
</dbReference>
<dbReference type="DIP" id="DIP-53760N"/>
<dbReference type="FunCoup" id="Q9UQR0">
    <property type="interactions" value="1616"/>
</dbReference>
<dbReference type="IntAct" id="Q9UQR0">
    <property type="interactions" value="37"/>
</dbReference>
<dbReference type="MINT" id="Q9UQR0"/>
<dbReference type="STRING" id="9606.ENSP00000251900"/>
<dbReference type="GlyCosmos" id="Q9UQR0">
    <property type="glycosylation" value="2 sites, 1 glycan"/>
</dbReference>
<dbReference type="GlyGen" id="Q9UQR0">
    <property type="glycosylation" value="5 sites, 1 O-linked glycan (4 sites)"/>
</dbReference>
<dbReference type="iPTMnet" id="Q9UQR0"/>
<dbReference type="MetOSite" id="Q9UQR0"/>
<dbReference type="PhosphoSitePlus" id="Q9UQR0"/>
<dbReference type="SwissPalm" id="Q9UQR0"/>
<dbReference type="BioMuta" id="SCML2"/>
<dbReference type="DMDM" id="47117338"/>
<dbReference type="jPOST" id="Q9UQR0"/>
<dbReference type="MassIVE" id="Q9UQR0"/>
<dbReference type="PaxDb" id="9606-ENSP00000251900"/>
<dbReference type="PeptideAtlas" id="Q9UQR0"/>
<dbReference type="ProteomicsDB" id="85572">
    <molecule id="Q9UQR0-1"/>
</dbReference>
<dbReference type="ProteomicsDB" id="85573">
    <molecule id="Q9UQR0-2"/>
</dbReference>
<dbReference type="Pumba" id="Q9UQR0"/>
<dbReference type="ABCD" id="Q9UQR0">
    <property type="antibodies" value="11 sequenced antibodies"/>
</dbReference>
<dbReference type="Antibodypedia" id="475">
    <property type="antibodies" value="194 antibodies from 27 providers"/>
</dbReference>
<dbReference type="DNASU" id="10389"/>
<dbReference type="Ensembl" id="ENST00000251900.9">
    <molecule id="Q9UQR0-1"/>
    <property type="protein sequence ID" value="ENSP00000251900.4"/>
    <property type="gene ID" value="ENSG00000102098.19"/>
</dbReference>
<dbReference type="Ensembl" id="ENST00000398048.4">
    <molecule id="Q9UQR0-2"/>
    <property type="protein sequence ID" value="ENSP00000381126.4"/>
    <property type="gene ID" value="ENSG00000102098.19"/>
</dbReference>
<dbReference type="GeneID" id="10389"/>
<dbReference type="KEGG" id="hsa:10389"/>
<dbReference type="MANE-Select" id="ENST00000251900.9">
    <property type="protein sequence ID" value="ENSP00000251900.4"/>
    <property type="RefSeq nucleotide sequence ID" value="NM_006089.3"/>
    <property type="RefSeq protein sequence ID" value="NP_006080.1"/>
</dbReference>
<dbReference type="UCSC" id="uc004cyl.3">
    <molecule id="Q9UQR0-1"/>
    <property type="organism name" value="human"/>
</dbReference>
<dbReference type="AGR" id="HGNC:10581"/>
<dbReference type="CTD" id="10389"/>
<dbReference type="DisGeNET" id="10389"/>
<dbReference type="GeneCards" id="SCML2"/>
<dbReference type="HGNC" id="HGNC:10581">
    <property type="gene designation" value="SCML2"/>
</dbReference>
<dbReference type="HPA" id="ENSG00000102098">
    <property type="expression patterns" value="Tissue enhanced (testis)"/>
</dbReference>
<dbReference type="MIM" id="300208">
    <property type="type" value="gene"/>
</dbReference>
<dbReference type="neXtProt" id="NX_Q9UQR0"/>
<dbReference type="OpenTargets" id="ENSG00000102098"/>
<dbReference type="PharmGKB" id="PA34999"/>
<dbReference type="VEuPathDB" id="HostDB:ENSG00000102098"/>
<dbReference type="eggNOG" id="KOG3766">
    <property type="taxonomic scope" value="Eukaryota"/>
</dbReference>
<dbReference type="GeneTree" id="ENSGT00940000159407"/>
<dbReference type="HOGENOM" id="CLU_015000_1_0_1"/>
<dbReference type="InParanoid" id="Q9UQR0"/>
<dbReference type="OMA" id="GMPKEEN"/>
<dbReference type="OrthoDB" id="5912862at2759"/>
<dbReference type="PAN-GO" id="Q9UQR0">
    <property type="GO annotations" value="4 GO annotations based on evolutionary models"/>
</dbReference>
<dbReference type="PhylomeDB" id="Q9UQR0"/>
<dbReference type="TreeFam" id="TF106488"/>
<dbReference type="PathwayCommons" id="Q9UQR0"/>
<dbReference type="SignaLink" id="Q9UQR0"/>
<dbReference type="BioGRID-ORCS" id="10389">
    <property type="hits" value="11 hits in 782 CRISPR screens"/>
</dbReference>
<dbReference type="ChiTaRS" id="SCML2">
    <property type="organism name" value="human"/>
</dbReference>
<dbReference type="EvolutionaryTrace" id="Q9UQR0"/>
<dbReference type="GenomeRNAi" id="10389"/>
<dbReference type="Pharos" id="Q9UQR0">
    <property type="development level" value="Tbio"/>
</dbReference>
<dbReference type="PRO" id="PR:Q9UQR0"/>
<dbReference type="Proteomes" id="UP000005640">
    <property type="component" value="Chromosome X"/>
</dbReference>
<dbReference type="RNAct" id="Q9UQR0">
    <property type="molecule type" value="protein"/>
</dbReference>
<dbReference type="Bgee" id="ENSG00000102098">
    <property type="expression patterns" value="Expressed in diaphragm and 177 other cell types or tissues"/>
</dbReference>
<dbReference type="ExpressionAtlas" id="Q9UQR0">
    <property type="expression patterns" value="baseline and differential"/>
</dbReference>
<dbReference type="GO" id="GO:0005634">
    <property type="term" value="C:nucleus"/>
    <property type="evidence" value="ECO:0000314"/>
    <property type="project" value="UniProtKB"/>
</dbReference>
<dbReference type="GO" id="GO:0031519">
    <property type="term" value="C:PcG protein complex"/>
    <property type="evidence" value="ECO:0000314"/>
    <property type="project" value="UniProtKB"/>
</dbReference>
<dbReference type="GO" id="GO:0003682">
    <property type="term" value="F:chromatin binding"/>
    <property type="evidence" value="ECO:0000318"/>
    <property type="project" value="GO_Central"/>
</dbReference>
<dbReference type="GO" id="GO:0042393">
    <property type="term" value="F:histone binding"/>
    <property type="evidence" value="ECO:0000318"/>
    <property type="project" value="GO_Central"/>
</dbReference>
<dbReference type="GO" id="GO:0009653">
    <property type="term" value="P:anatomical structure morphogenesis"/>
    <property type="evidence" value="ECO:0000315"/>
    <property type="project" value="GO_Central"/>
</dbReference>
<dbReference type="GO" id="GO:0045892">
    <property type="term" value="P:negative regulation of DNA-templated transcription"/>
    <property type="evidence" value="ECO:0000318"/>
    <property type="project" value="GO_Central"/>
</dbReference>
<dbReference type="CDD" id="cd20109">
    <property type="entry name" value="MBT_SCML2_rpt2"/>
    <property type="match status" value="1"/>
</dbReference>
<dbReference type="CDD" id="cd09578">
    <property type="entry name" value="SAM_Scm"/>
    <property type="match status" value="1"/>
</dbReference>
<dbReference type="FunFam" id="1.10.150.50:FF:000018">
    <property type="entry name" value="Polycomb protein scmh1 isoform 4"/>
    <property type="match status" value="1"/>
</dbReference>
<dbReference type="FunFam" id="2.30.30.140:FF:000016">
    <property type="entry name" value="polycomb protein SCMH1 isoform X1"/>
    <property type="match status" value="1"/>
</dbReference>
<dbReference type="FunFam" id="3.90.1150.190:FF:000003">
    <property type="entry name" value="Scm polycomb group protein-like 2"/>
    <property type="match status" value="1"/>
</dbReference>
<dbReference type="Gene3D" id="2.30.30.140">
    <property type="match status" value="2"/>
</dbReference>
<dbReference type="Gene3D" id="3.90.1150.190">
    <property type="entry name" value="SLED domain"/>
    <property type="match status" value="1"/>
</dbReference>
<dbReference type="Gene3D" id="1.10.150.50">
    <property type="entry name" value="Transcription Factor, Ets-1"/>
    <property type="match status" value="1"/>
</dbReference>
<dbReference type="InterPro" id="IPR004092">
    <property type="entry name" value="Mbt"/>
</dbReference>
<dbReference type="InterPro" id="IPR050548">
    <property type="entry name" value="PcG_chromatin_remod_factors"/>
</dbReference>
<dbReference type="InterPro" id="IPR001660">
    <property type="entry name" value="SAM"/>
</dbReference>
<dbReference type="InterPro" id="IPR013761">
    <property type="entry name" value="SAM/pointed_sf"/>
</dbReference>
<dbReference type="InterPro" id="IPR047531">
    <property type="entry name" value="SAM_Scm-like"/>
</dbReference>
<dbReference type="InterPro" id="IPR033763">
    <property type="entry name" value="SCML2_RBR"/>
</dbReference>
<dbReference type="InterPro" id="IPR021987">
    <property type="entry name" value="SLED"/>
</dbReference>
<dbReference type="InterPro" id="IPR038348">
    <property type="entry name" value="SLED_sf"/>
</dbReference>
<dbReference type="PANTHER" id="PTHR12247">
    <property type="entry name" value="POLYCOMB GROUP PROTEIN"/>
    <property type="match status" value="1"/>
</dbReference>
<dbReference type="PANTHER" id="PTHR12247:SF84">
    <property type="entry name" value="SEX COMB ON MIDLEG-LIKE PROTEIN 2"/>
    <property type="match status" value="1"/>
</dbReference>
<dbReference type="Pfam" id="PF02820">
    <property type="entry name" value="MBT"/>
    <property type="match status" value="2"/>
</dbReference>
<dbReference type="Pfam" id="PF17208">
    <property type="entry name" value="RBR"/>
    <property type="match status" value="1"/>
</dbReference>
<dbReference type="Pfam" id="PF00536">
    <property type="entry name" value="SAM_1"/>
    <property type="match status" value="1"/>
</dbReference>
<dbReference type="Pfam" id="PF12140">
    <property type="entry name" value="SLED"/>
    <property type="match status" value="1"/>
</dbReference>
<dbReference type="SMART" id="SM00561">
    <property type="entry name" value="MBT"/>
    <property type="match status" value="2"/>
</dbReference>
<dbReference type="SMART" id="SM00454">
    <property type="entry name" value="SAM"/>
    <property type="match status" value="1"/>
</dbReference>
<dbReference type="SUPFAM" id="SSF47769">
    <property type="entry name" value="SAM/Pointed domain"/>
    <property type="match status" value="1"/>
</dbReference>
<dbReference type="SUPFAM" id="SSF63748">
    <property type="entry name" value="Tudor/PWWP/MBT"/>
    <property type="match status" value="2"/>
</dbReference>
<dbReference type="PROSITE" id="PS51079">
    <property type="entry name" value="MBT"/>
    <property type="match status" value="2"/>
</dbReference>
<name>SCML2_HUMAN</name>
<reference key="1">
    <citation type="journal article" date="1999" name="Genomics">
        <title>Identification of SCML2, a second human gene homologous to the Drosophila Sex comb on midleg (Scm): a new gene cluster on Xp22.</title>
        <authorList>
            <person name="Montini E."/>
            <person name="Buchner G."/>
            <person name="Spalluto C."/>
            <person name="Andolfi G."/>
            <person name="Caruso A."/>
            <person name="de Dunnen J.T."/>
            <person name="Trump D."/>
            <person name="Rocchi M."/>
            <person name="Ballabio A."/>
            <person name="Franco B."/>
        </authorList>
    </citation>
    <scope>NUCLEOTIDE SEQUENCE [MRNA] (ISOFORM 1)</scope>
    <scope>TISSUE SPECIFICITY</scope>
</reference>
<reference key="2">
    <citation type="journal article" date="2007" name="BMC Genomics">
        <title>The full-ORF clone resource of the German cDNA consortium.</title>
        <authorList>
            <person name="Bechtel S."/>
            <person name="Rosenfelder H."/>
            <person name="Duda A."/>
            <person name="Schmidt C.P."/>
            <person name="Ernst U."/>
            <person name="Wellenreuther R."/>
            <person name="Mehrle A."/>
            <person name="Schuster C."/>
            <person name="Bahr A."/>
            <person name="Bloecker H."/>
            <person name="Heubner D."/>
            <person name="Hoerlein A."/>
            <person name="Michel G."/>
            <person name="Wedler H."/>
            <person name="Koehrer K."/>
            <person name="Ottenwaelder B."/>
            <person name="Poustka A."/>
            <person name="Wiemann S."/>
            <person name="Schupp I."/>
        </authorList>
    </citation>
    <scope>NUCLEOTIDE SEQUENCE [LARGE SCALE MRNA] (ISOFORM 2)</scope>
    <source>
        <tissue>Testis</tissue>
    </source>
</reference>
<reference key="3">
    <citation type="journal article" date="2005" name="Nature">
        <title>The DNA sequence of the human X chromosome.</title>
        <authorList>
            <person name="Ross M.T."/>
            <person name="Grafham D.V."/>
            <person name="Coffey A.J."/>
            <person name="Scherer S."/>
            <person name="McLay K."/>
            <person name="Muzny D."/>
            <person name="Platzer M."/>
            <person name="Howell G.R."/>
            <person name="Burrows C."/>
            <person name="Bird C.P."/>
            <person name="Frankish A."/>
            <person name="Lovell F.L."/>
            <person name="Howe K.L."/>
            <person name="Ashurst J.L."/>
            <person name="Fulton R.S."/>
            <person name="Sudbrak R."/>
            <person name="Wen G."/>
            <person name="Jones M.C."/>
            <person name="Hurles M.E."/>
            <person name="Andrews T.D."/>
            <person name="Scott C.E."/>
            <person name="Searle S."/>
            <person name="Ramser J."/>
            <person name="Whittaker A."/>
            <person name="Deadman R."/>
            <person name="Carter N.P."/>
            <person name="Hunt S.E."/>
            <person name="Chen R."/>
            <person name="Cree A."/>
            <person name="Gunaratne P."/>
            <person name="Havlak P."/>
            <person name="Hodgson A."/>
            <person name="Metzker M.L."/>
            <person name="Richards S."/>
            <person name="Scott G."/>
            <person name="Steffen D."/>
            <person name="Sodergren E."/>
            <person name="Wheeler D.A."/>
            <person name="Worley K.C."/>
            <person name="Ainscough R."/>
            <person name="Ambrose K.D."/>
            <person name="Ansari-Lari M.A."/>
            <person name="Aradhya S."/>
            <person name="Ashwell R.I."/>
            <person name="Babbage A.K."/>
            <person name="Bagguley C.L."/>
            <person name="Ballabio A."/>
            <person name="Banerjee R."/>
            <person name="Barker G.E."/>
            <person name="Barlow K.F."/>
            <person name="Barrett I.P."/>
            <person name="Bates K.N."/>
            <person name="Beare D.M."/>
            <person name="Beasley H."/>
            <person name="Beasley O."/>
            <person name="Beck A."/>
            <person name="Bethel G."/>
            <person name="Blechschmidt K."/>
            <person name="Brady N."/>
            <person name="Bray-Allen S."/>
            <person name="Bridgeman A.M."/>
            <person name="Brown A.J."/>
            <person name="Brown M.J."/>
            <person name="Bonnin D."/>
            <person name="Bruford E.A."/>
            <person name="Buhay C."/>
            <person name="Burch P."/>
            <person name="Burford D."/>
            <person name="Burgess J."/>
            <person name="Burrill W."/>
            <person name="Burton J."/>
            <person name="Bye J.M."/>
            <person name="Carder C."/>
            <person name="Carrel L."/>
            <person name="Chako J."/>
            <person name="Chapman J.C."/>
            <person name="Chavez D."/>
            <person name="Chen E."/>
            <person name="Chen G."/>
            <person name="Chen Y."/>
            <person name="Chen Z."/>
            <person name="Chinault C."/>
            <person name="Ciccodicola A."/>
            <person name="Clark S.Y."/>
            <person name="Clarke G."/>
            <person name="Clee C.M."/>
            <person name="Clegg S."/>
            <person name="Clerc-Blankenburg K."/>
            <person name="Clifford K."/>
            <person name="Cobley V."/>
            <person name="Cole C.G."/>
            <person name="Conquer J.S."/>
            <person name="Corby N."/>
            <person name="Connor R.E."/>
            <person name="David R."/>
            <person name="Davies J."/>
            <person name="Davis C."/>
            <person name="Davis J."/>
            <person name="Delgado O."/>
            <person name="Deshazo D."/>
            <person name="Dhami P."/>
            <person name="Ding Y."/>
            <person name="Dinh H."/>
            <person name="Dodsworth S."/>
            <person name="Draper H."/>
            <person name="Dugan-Rocha S."/>
            <person name="Dunham A."/>
            <person name="Dunn M."/>
            <person name="Durbin K.J."/>
            <person name="Dutta I."/>
            <person name="Eades T."/>
            <person name="Ellwood M."/>
            <person name="Emery-Cohen A."/>
            <person name="Errington H."/>
            <person name="Evans K.L."/>
            <person name="Faulkner L."/>
            <person name="Francis F."/>
            <person name="Frankland J."/>
            <person name="Fraser A.E."/>
            <person name="Galgoczy P."/>
            <person name="Gilbert J."/>
            <person name="Gill R."/>
            <person name="Gloeckner G."/>
            <person name="Gregory S.G."/>
            <person name="Gribble S."/>
            <person name="Griffiths C."/>
            <person name="Grocock R."/>
            <person name="Gu Y."/>
            <person name="Gwilliam R."/>
            <person name="Hamilton C."/>
            <person name="Hart E.A."/>
            <person name="Hawes A."/>
            <person name="Heath P.D."/>
            <person name="Heitmann K."/>
            <person name="Hennig S."/>
            <person name="Hernandez J."/>
            <person name="Hinzmann B."/>
            <person name="Ho S."/>
            <person name="Hoffs M."/>
            <person name="Howden P.J."/>
            <person name="Huckle E.J."/>
            <person name="Hume J."/>
            <person name="Hunt P.J."/>
            <person name="Hunt A.R."/>
            <person name="Isherwood J."/>
            <person name="Jacob L."/>
            <person name="Johnson D."/>
            <person name="Jones S."/>
            <person name="de Jong P.J."/>
            <person name="Joseph S.S."/>
            <person name="Keenan S."/>
            <person name="Kelly S."/>
            <person name="Kershaw J.K."/>
            <person name="Khan Z."/>
            <person name="Kioschis P."/>
            <person name="Klages S."/>
            <person name="Knights A.J."/>
            <person name="Kosiura A."/>
            <person name="Kovar-Smith C."/>
            <person name="Laird G.K."/>
            <person name="Langford C."/>
            <person name="Lawlor S."/>
            <person name="Leversha M."/>
            <person name="Lewis L."/>
            <person name="Liu W."/>
            <person name="Lloyd C."/>
            <person name="Lloyd D.M."/>
            <person name="Loulseged H."/>
            <person name="Loveland J.E."/>
            <person name="Lovell J.D."/>
            <person name="Lozado R."/>
            <person name="Lu J."/>
            <person name="Lyne R."/>
            <person name="Ma J."/>
            <person name="Maheshwari M."/>
            <person name="Matthews L.H."/>
            <person name="McDowall J."/>
            <person name="McLaren S."/>
            <person name="McMurray A."/>
            <person name="Meidl P."/>
            <person name="Meitinger T."/>
            <person name="Milne S."/>
            <person name="Miner G."/>
            <person name="Mistry S.L."/>
            <person name="Morgan M."/>
            <person name="Morris S."/>
            <person name="Mueller I."/>
            <person name="Mullikin J.C."/>
            <person name="Nguyen N."/>
            <person name="Nordsiek G."/>
            <person name="Nyakatura G."/>
            <person name="O'dell C.N."/>
            <person name="Okwuonu G."/>
            <person name="Palmer S."/>
            <person name="Pandian R."/>
            <person name="Parker D."/>
            <person name="Parrish J."/>
            <person name="Pasternak S."/>
            <person name="Patel D."/>
            <person name="Pearce A.V."/>
            <person name="Pearson D.M."/>
            <person name="Pelan S.E."/>
            <person name="Perez L."/>
            <person name="Porter K.M."/>
            <person name="Ramsey Y."/>
            <person name="Reichwald K."/>
            <person name="Rhodes S."/>
            <person name="Ridler K.A."/>
            <person name="Schlessinger D."/>
            <person name="Schueler M.G."/>
            <person name="Sehra H.K."/>
            <person name="Shaw-Smith C."/>
            <person name="Shen H."/>
            <person name="Sheridan E.M."/>
            <person name="Shownkeen R."/>
            <person name="Skuce C.D."/>
            <person name="Smith M.L."/>
            <person name="Sotheran E.C."/>
            <person name="Steingruber H.E."/>
            <person name="Steward C.A."/>
            <person name="Storey R."/>
            <person name="Swann R.M."/>
            <person name="Swarbreck D."/>
            <person name="Tabor P.E."/>
            <person name="Taudien S."/>
            <person name="Taylor T."/>
            <person name="Teague B."/>
            <person name="Thomas K."/>
            <person name="Thorpe A."/>
            <person name="Timms K."/>
            <person name="Tracey A."/>
            <person name="Trevanion S."/>
            <person name="Tromans A.C."/>
            <person name="d'Urso M."/>
            <person name="Verduzco D."/>
            <person name="Villasana D."/>
            <person name="Waldron L."/>
            <person name="Wall M."/>
            <person name="Wang Q."/>
            <person name="Warren J."/>
            <person name="Warry G.L."/>
            <person name="Wei X."/>
            <person name="West A."/>
            <person name="Whitehead S.L."/>
            <person name="Whiteley M.N."/>
            <person name="Wilkinson J.E."/>
            <person name="Willey D.L."/>
            <person name="Williams G."/>
            <person name="Williams L."/>
            <person name="Williamson A."/>
            <person name="Williamson H."/>
            <person name="Wilming L."/>
            <person name="Woodmansey R.L."/>
            <person name="Wray P.W."/>
            <person name="Yen J."/>
            <person name="Zhang J."/>
            <person name="Zhou J."/>
            <person name="Zoghbi H."/>
            <person name="Zorilla S."/>
            <person name="Buck D."/>
            <person name="Reinhardt R."/>
            <person name="Poustka A."/>
            <person name="Rosenthal A."/>
            <person name="Lehrach H."/>
            <person name="Meindl A."/>
            <person name="Minx P.J."/>
            <person name="Hillier L.W."/>
            <person name="Willard H.F."/>
            <person name="Wilson R.K."/>
            <person name="Waterston R.H."/>
            <person name="Rice C.M."/>
            <person name="Vaudin M."/>
            <person name="Coulson A."/>
            <person name="Nelson D.L."/>
            <person name="Weinstock G."/>
            <person name="Sulston J.E."/>
            <person name="Durbin R.M."/>
            <person name="Hubbard T."/>
            <person name="Gibbs R.A."/>
            <person name="Beck S."/>
            <person name="Rogers J."/>
            <person name="Bentley D.R."/>
        </authorList>
    </citation>
    <scope>NUCLEOTIDE SEQUENCE [LARGE SCALE GENOMIC DNA]</scope>
</reference>
<reference key="4">
    <citation type="submission" date="2005-07" db="EMBL/GenBank/DDBJ databases">
        <authorList>
            <person name="Mural R.J."/>
            <person name="Istrail S."/>
            <person name="Sutton G.G."/>
            <person name="Florea L."/>
            <person name="Halpern A.L."/>
            <person name="Mobarry C.M."/>
            <person name="Lippert R."/>
            <person name="Walenz B."/>
            <person name="Shatkay H."/>
            <person name="Dew I."/>
            <person name="Miller J.R."/>
            <person name="Flanigan M.J."/>
            <person name="Edwards N.J."/>
            <person name="Bolanos R."/>
            <person name="Fasulo D."/>
            <person name="Halldorsson B.V."/>
            <person name="Hannenhalli S."/>
            <person name="Turner R."/>
            <person name="Yooseph S."/>
            <person name="Lu F."/>
            <person name="Nusskern D.R."/>
            <person name="Shue B.C."/>
            <person name="Zheng X.H."/>
            <person name="Zhong F."/>
            <person name="Delcher A.L."/>
            <person name="Huson D.H."/>
            <person name="Kravitz S.A."/>
            <person name="Mouchard L."/>
            <person name="Reinert K."/>
            <person name="Remington K.A."/>
            <person name="Clark A.G."/>
            <person name="Waterman M.S."/>
            <person name="Eichler E.E."/>
            <person name="Adams M.D."/>
            <person name="Hunkapiller M.W."/>
            <person name="Myers E.W."/>
            <person name="Venter J.C."/>
        </authorList>
    </citation>
    <scope>NUCLEOTIDE SEQUENCE [LARGE SCALE GENOMIC DNA]</scope>
</reference>
<reference key="5">
    <citation type="journal article" date="2004" name="Genome Res.">
        <title>The status, quality, and expansion of the NIH full-length cDNA project: the Mammalian Gene Collection (MGC).</title>
        <authorList>
            <consortium name="The MGC Project Team"/>
        </authorList>
    </citation>
    <scope>NUCLEOTIDE SEQUENCE [LARGE SCALE MRNA] (ISOFORM 1)</scope>
    <source>
        <tissue>Testis</tissue>
        <tissue>Uterus</tissue>
    </source>
</reference>
<reference key="6">
    <citation type="journal article" date="2007" name="Science">
        <title>ATM and ATR substrate analysis reveals extensive protein networks responsive to DNA damage.</title>
        <authorList>
            <person name="Matsuoka S."/>
            <person name="Ballif B.A."/>
            <person name="Smogorzewska A."/>
            <person name="McDonald E.R. III"/>
            <person name="Hurov K.E."/>
            <person name="Luo J."/>
            <person name="Bakalarski C.E."/>
            <person name="Zhao Z."/>
            <person name="Solimini N."/>
            <person name="Lerenthal Y."/>
            <person name="Shiloh Y."/>
            <person name="Gygi S.P."/>
            <person name="Elledge S.J."/>
        </authorList>
    </citation>
    <scope>IDENTIFICATION BY MASS SPECTROMETRY [LARGE SCALE ANALYSIS]</scope>
    <source>
        <tissue>Embryonic kidney</tissue>
    </source>
</reference>
<reference key="7">
    <citation type="journal article" date="2008" name="Proc. Natl. Acad. Sci. U.S.A.">
        <title>A quantitative atlas of mitotic phosphorylation.</title>
        <authorList>
            <person name="Dephoure N."/>
            <person name="Zhou C."/>
            <person name="Villen J."/>
            <person name="Beausoleil S.A."/>
            <person name="Bakalarski C.E."/>
            <person name="Elledge S.J."/>
            <person name="Gygi S.P."/>
        </authorList>
    </citation>
    <scope>PHOSPHORYLATION [LARGE SCALE ANALYSIS] AT SER-256; SER-267; SER-299; SER-300; THR-305; SER-499; THR-503; SER-511; SER-583; SER-590 AND SER-594</scope>
    <scope>IDENTIFICATION BY MASS SPECTROMETRY [LARGE SCALE ANALYSIS]</scope>
    <source>
        <tissue>Cervix carcinoma</tissue>
    </source>
</reference>
<reference key="8">
    <citation type="journal article" date="2009" name="Anal. Chem.">
        <title>Lys-N and trypsin cover complementary parts of the phosphoproteome in a refined SCX-based approach.</title>
        <authorList>
            <person name="Gauci S."/>
            <person name="Helbig A.O."/>
            <person name="Slijper M."/>
            <person name="Krijgsveld J."/>
            <person name="Heck A.J."/>
            <person name="Mohammed S."/>
        </authorList>
    </citation>
    <scope>IDENTIFICATION BY MASS SPECTROMETRY [LARGE SCALE ANALYSIS]</scope>
</reference>
<reference key="9">
    <citation type="journal article" date="2009" name="Sci. Signal.">
        <title>Quantitative phosphoproteomic analysis of T cell receptor signaling reveals system-wide modulation of protein-protein interactions.</title>
        <authorList>
            <person name="Mayya V."/>
            <person name="Lundgren D.H."/>
            <person name="Hwang S.-I."/>
            <person name="Rezaul K."/>
            <person name="Wu L."/>
            <person name="Eng J.K."/>
            <person name="Rodionov V."/>
            <person name="Han D.K."/>
        </authorList>
    </citation>
    <scope>PHOSPHORYLATION [LARGE SCALE ANALYSIS] AT SER-499; SER-511 AND SER-590</scope>
    <scope>IDENTIFICATION BY MASS SPECTROMETRY [LARGE SCALE ANALYSIS]</scope>
    <source>
        <tissue>Leukemic T-cell</tissue>
    </source>
</reference>
<reference key="10">
    <citation type="journal article" date="2010" name="Sci. Signal.">
        <title>Quantitative phosphoproteomics reveals widespread full phosphorylation site occupancy during mitosis.</title>
        <authorList>
            <person name="Olsen J.V."/>
            <person name="Vermeulen M."/>
            <person name="Santamaria A."/>
            <person name="Kumar C."/>
            <person name="Miller M.L."/>
            <person name="Jensen L.J."/>
            <person name="Gnad F."/>
            <person name="Cox J."/>
            <person name="Jensen T.S."/>
            <person name="Nigg E.A."/>
            <person name="Brunak S."/>
            <person name="Mann M."/>
        </authorList>
    </citation>
    <scope>PHOSPHORYLATION [LARGE SCALE ANALYSIS] AT SER-499; THR-503; SER-511 AND SER-590</scope>
    <scope>IDENTIFICATION BY MASS SPECTROMETRY [LARGE SCALE ANALYSIS]</scope>
    <source>
        <tissue>Cervix carcinoma</tissue>
    </source>
</reference>
<reference key="11">
    <citation type="journal article" date="2011" name="BMC Syst. Biol.">
        <title>Initial characterization of the human central proteome.</title>
        <authorList>
            <person name="Burkard T.R."/>
            <person name="Planyavsky M."/>
            <person name="Kaupe I."/>
            <person name="Breitwieser F.P."/>
            <person name="Buerckstuemmer T."/>
            <person name="Bennett K.L."/>
            <person name="Superti-Furga G."/>
            <person name="Colinge J."/>
        </authorList>
    </citation>
    <scope>IDENTIFICATION BY MASS SPECTROMETRY [LARGE SCALE ANALYSIS]</scope>
</reference>
<reference key="12">
    <citation type="journal article" date="2011" name="Sci. Signal.">
        <title>System-wide temporal characterization of the proteome and phosphoproteome of human embryonic stem cell differentiation.</title>
        <authorList>
            <person name="Rigbolt K.T."/>
            <person name="Prokhorova T.A."/>
            <person name="Akimov V."/>
            <person name="Henningsen J."/>
            <person name="Johansen P.T."/>
            <person name="Kratchmarova I."/>
            <person name="Kassem M."/>
            <person name="Mann M."/>
            <person name="Olsen J.V."/>
            <person name="Blagoev B."/>
        </authorList>
    </citation>
    <scope>PHOSPHORYLATION [LARGE SCALE ANALYSIS] AT SER-499; SER-511 AND SER-590</scope>
    <scope>IDENTIFICATION BY MASS SPECTROMETRY [LARGE SCALE ANALYSIS]</scope>
</reference>
<reference key="13">
    <citation type="journal article" date="2013" name="J. Proteome Res.">
        <title>Toward a comprehensive characterization of a human cancer cell phosphoproteome.</title>
        <authorList>
            <person name="Zhou H."/>
            <person name="Di Palma S."/>
            <person name="Preisinger C."/>
            <person name="Peng M."/>
            <person name="Polat A.N."/>
            <person name="Heck A.J."/>
            <person name="Mohammed S."/>
        </authorList>
    </citation>
    <scope>PHOSPHORYLATION [LARGE SCALE ANALYSIS] AT SER-256; SER-261; SER-267; SER-499; SER-511; SER-522; SER-570; SER-583 AND SER-590</scope>
    <scope>IDENTIFICATION BY MASS SPECTROMETRY [LARGE SCALE ANALYSIS]</scope>
    <source>
        <tissue>Cervix carcinoma</tissue>
        <tissue>Erythroleukemia</tissue>
    </source>
</reference>
<reference key="14">
    <citation type="journal article" date="2014" name="J. Proteomics">
        <title>An enzyme assisted RP-RPLC approach for in-depth analysis of human liver phosphoproteome.</title>
        <authorList>
            <person name="Bian Y."/>
            <person name="Song C."/>
            <person name="Cheng K."/>
            <person name="Dong M."/>
            <person name="Wang F."/>
            <person name="Huang J."/>
            <person name="Sun D."/>
            <person name="Wang L."/>
            <person name="Ye M."/>
            <person name="Zou H."/>
        </authorList>
    </citation>
    <scope>PHOSPHORYLATION [LARGE SCALE ANALYSIS] AT SER-590</scope>
    <scope>IDENTIFICATION BY MASS SPECTROMETRY [LARGE SCALE ANALYSIS]</scope>
    <source>
        <tissue>Liver</tissue>
    </source>
</reference>
<reference key="15">
    <citation type="journal article" date="2014" name="Nat. Struct. Mol. Biol.">
        <title>Uncovering global SUMOylation signaling networks in a site-specific manner.</title>
        <authorList>
            <person name="Hendriks I.A."/>
            <person name="D'Souza R.C."/>
            <person name="Yang B."/>
            <person name="Verlaan-de Vries M."/>
            <person name="Mann M."/>
            <person name="Vertegaal A.C."/>
        </authorList>
    </citation>
    <scope>SUMOYLATION [LARGE SCALE ANALYSIS] AT LYS-536</scope>
    <scope>IDENTIFICATION BY MASS SPECTROMETRY [LARGE SCALE ANALYSIS]</scope>
</reference>
<reference key="16">
    <citation type="journal article" date="2017" name="Nat. Struct. Mol. Biol.">
        <title>Site-specific mapping of the human SUMO proteome reveals co-modification with phosphorylation.</title>
        <authorList>
            <person name="Hendriks I.A."/>
            <person name="Lyon D."/>
            <person name="Young C."/>
            <person name="Jensen L.J."/>
            <person name="Vertegaal A.C."/>
            <person name="Nielsen M.L."/>
        </authorList>
    </citation>
    <scope>SUMOYLATION [LARGE SCALE ANALYSIS] AT LYS-518; LYS-536; LYS-599 AND LYS-605</scope>
    <scope>IDENTIFICATION BY MASS SPECTROMETRY [LARGE SCALE ANALYSIS]</scope>
</reference>
<reference key="17">
    <citation type="journal article" date="2003" name="J. Biol. Chem.">
        <title>Crystal structure of the malignant brain tumor (MBT) repeats in sex comb on midleg-like 2 (SCML2).</title>
        <authorList>
            <person name="Sathyamurthy A."/>
            <person name="Allen M.D."/>
            <person name="Murzin A.G."/>
            <person name="Bycroft M."/>
        </authorList>
    </citation>
    <scope>X-RAY CRYSTALLOGRAPHY (1.78 ANGSTROMS) OF 33-243</scope>
</reference>
<accession>Q9UQR0</accession>
<accession>Q5JXE6</accession>
<accession>Q86U98</accession>
<accession>Q8IWD0</accession>
<accession>Q8NDP2</accession>
<accession>Q9UGC5</accession>
<protein>
    <recommendedName>
        <fullName>Sex comb on midleg-like protein 2</fullName>
    </recommendedName>
</protein>
<evidence type="ECO:0000250" key="1"/>
<evidence type="ECO:0000256" key="2">
    <source>
        <dbReference type="SAM" id="MobiDB-lite"/>
    </source>
</evidence>
<evidence type="ECO:0000269" key="3">
    <source>
    </source>
</evidence>
<evidence type="ECO:0000303" key="4">
    <source>
    </source>
</evidence>
<evidence type="ECO:0000305" key="5"/>
<evidence type="ECO:0007744" key="6">
    <source>
    </source>
</evidence>
<evidence type="ECO:0007744" key="7">
    <source>
    </source>
</evidence>
<evidence type="ECO:0007744" key="8">
    <source>
    </source>
</evidence>
<evidence type="ECO:0007744" key="9">
    <source>
    </source>
</evidence>
<evidence type="ECO:0007744" key="10">
    <source>
    </source>
</evidence>
<evidence type="ECO:0007744" key="11">
    <source>
    </source>
</evidence>
<evidence type="ECO:0007744" key="12">
    <source>
    </source>
</evidence>
<evidence type="ECO:0007744" key="13">
    <source>
    </source>
</evidence>
<evidence type="ECO:0007829" key="14">
    <source>
        <dbReference type="PDB" id="2BIV"/>
    </source>
</evidence>
<evidence type="ECO:0007829" key="15">
    <source>
        <dbReference type="PDB" id="2MEM"/>
    </source>
</evidence>
<evidence type="ECO:0007829" key="16">
    <source>
        <dbReference type="PDB" id="4EDU"/>
    </source>
</evidence>
<feature type="chain" id="PRO_0000097628" description="Sex comb on midleg-like protein 2">
    <location>
        <begin position="1"/>
        <end position="700"/>
    </location>
</feature>
<feature type="repeat" description="MBT 1">
    <location>
        <begin position="33"/>
        <end position="131"/>
    </location>
</feature>
<feature type="repeat" description="MBT 2">
    <location>
        <begin position="139"/>
        <end position="240"/>
    </location>
</feature>
<feature type="domain" description="SAM">
    <location>
        <begin position="631"/>
        <end position="700"/>
    </location>
</feature>
<feature type="region of interest" description="Disordered" evidence="2">
    <location>
        <begin position="1"/>
        <end position="33"/>
    </location>
</feature>
<feature type="region of interest" description="Disordered" evidence="2">
    <location>
        <begin position="253"/>
        <end position="320"/>
    </location>
</feature>
<feature type="region of interest" description="Disordered" evidence="2">
    <location>
        <begin position="466"/>
        <end position="550"/>
    </location>
</feature>
<feature type="region of interest" description="Disordered" evidence="2">
    <location>
        <begin position="575"/>
        <end position="594"/>
    </location>
</feature>
<feature type="compositionally biased region" description="Polar residues" evidence="2">
    <location>
        <begin position="19"/>
        <end position="28"/>
    </location>
</feature>
<feature type="compositionally biased region" description="Polar residues" evidence="2">
    <location>
        <begin position="253"/>
        <end position="281"/>
    </location>
</feature>
<feature type="compositionally biased region" description="Basic and acidic residues" evidence="2">
    <location>
        <begin position="476"/>
        <end position="495"/>
    </location>
</feature>
<feature type="compositionally biased region" description="Basic and acidic residues" evidence="2">
    <location>
        <begin position="535"/>
        <end position="545"/>
    </location>
</feature>
<feature type="compositionally biased region" description="Polar residues" evidence="2">
    <location>
        <begin position="575"/>
        <end position="584"/>
    </location>
</feature>
<feature type="modified residue" description="Phosphoserine" evidence="6 10">
    <location>
        <position position="256"/>
    </location>
</feature>
<feature type="modified residue" description="Phosphoserine" evidence="10">
    <location>
        <position position="261"/>
    </location>
</feature>
<feature type="modified residue" description="Phosphoserine" evidence="6 10">
    <location>
        <position position="267"/>
    </location>
</feature>
<feature type="modified residue" description="Phosphoserine" evidence="6">
    <location>
        <position position="299"/>
    </location>
</feature>
<feature type="modified residue" description="Phosphoserine" evidence="6">
    <location>
        <position position="300"/>
    </location>
</feature>
<feature type="modified residue" description="Phosphothreonine" evidence="6">
    <location>
        <position position="305"/>
    </location>
</feature>
<feature type="modified residue" description="Phosphoserine" evidence="6 7 8 9 10">
    <location>
        <position position="499"/>
    </location>
</feature>
<feature type="modified residue" description="Phosphothreonine" evidence="6 8">
    <location>
        <position position="503"/>
    </location>
</feature>
<feature type="modified residue" description="Phosphoserine" evidence="6 7 8 9 10">
    <location>
        <position position="511"/>
    </location>
</feature>
<feature type="modified residue" description="Phosphoserine" evidence="10">
    <location>
        <position position="522"/>
    </location>
</feature>
<feature type="modified residue" description="Phosphoserine" evidence="10">
    <location>
        <position position="570"/>
    </location>
</feature>
<feature type="modified residue" description="Phosphoserine" evidence="6 10">
    <location>
        <position position="583"/>
    </location>
</feature>
<feature type="modified residue" description="Phosphoserine" evidence="6 7 8 9 10 11">
    <location>
        <position position="590"/>
    </location>
</feature>
<feature type="modified residue" description="Phosphoserine" evidence="6">
    <location>
        <position position="594"/>
    </location>
</feature>
<feature type="cross-link" description="Glycyl lysine isopeptide (Lys-Gly) (interchain with G-Cter in SUMO2)" evidence="13">
    <location>
        <position position="518"/>
    </location>
</feature>
<feature type="cross-link" description="Glycyl lysine isopeptide (Lys-Gly) (interchain with G-Cter in SUMO2)" evidence="12 13">
    <location>
        <position position="536"/>
    </location>
</feature>
<feature type="cross-link" description="Glycyl lysine isopeptide (Lys-Gly) (interchain with G-Cter in SUMO2)" evidence="13">
    <location>
        <position position="599"/>
    </location>
</feature>
<feature type="cross-link" description="Glycyl lysine isopeptide (Lys-Gly) (interchain with G-Cter in SUMO2)" evidence="13">
    <location>
        <position position="605"/>
    </location>
</feature>
<feature type="splice variant" id="VSP_010277" description="In isoform 2." evidence="4">
    <location>
        <begin position="1"/>
        <end position="562"/>
    </location>
</feature>
<feature type="helix" evidence="14">
    <location>
        <begin position="35"/>
        <end position="42"/>
    </location>
</feature>
<feature type="helix" evidence="14">
    <location>
        <begin position="49"/>
        <end position="51"/>
    </location>
</feature>
<feature type="strand" evidence="14">
    <location>
        <begin position="52"/>
        <end position="54"/>
    </location>
</feature>
<feature type="strand" evidence="14">
    <location>
        <begin position="68"/>
        <end position="73"/>
    </location>
</feature>
<feature type="strand" evidence="14">
    <location>
        <begin position="76"/>
        <end position="89"/>
    </location>
</feature>
<feature type="strand" evidence="14">
    <location>
        <begin position="92"/>
        <end position="97"/>
    </location>
</feature>
<feature type="strand" evidence="14">
    <location>
        <begin position="102"/>
        <end position="104"/>
    </location>
</feature>
<feature type="strand" evidence="14">
    <location>
        <begin position="106"/>
        <end position="109"/>
    </location>
</feature>
<feature type="strand" evidence="16">
    <location>
        <begin position="115"/>
        <end position="117"/>
    </location>
</feature>
<feature type="helix" evidence="14">
    <location>
        <begin position="120"/>
        <end position="123"/>
    </location>
</feature>
<feature type="helix" evidence="14">
    <location>
        <begin position="138"/>
        <end position="140"/>
    </location>
</feature>
<feature type="helix" evidence="14">
    <location>
        <begin position="141"/>
        <end position="149"/>
    </location>
</feature>
<feature type="helix" evidence="14">
    <location>
        <begin position="157"/>
        <end position="159"/>
    </location>
</feature>
<feature type="strand" evidence="14">
    <location>
        <begin position="177"/>
        <end position="181"/>
    </location>
</feature>
<feature type="strand" evidence="14">
    <location>
        <begin position="189"/>
        <end position="198"/>
    </location>
</feature>
<feature type="strand" evidence="14">
    <location>
        <begin position="201"/>
        <end position="206"/>
    </location>
</feature>
<feature type="helix" evidence="14">
    <location>
        <begin position="211"/>
        <end position="213"/>
    </location>
</feature>
<feature type="strand" evidence="14">
    <location>
        <begin position="215"/>
        <end position="218"/>
    </location>
</feature>
<feature type="helix" evidence="14">
    <location>
        <begin position="229"/>
        <end position="233"/>
    </location>
</feature>
<feature type="strand" evidence="15">
    <location>
        <begin position="356"/>
        <end position="359"/>
    </location>
</feature>
<feature type="strand" evidence="15">
    <location>
        <begin position="369"/>
        <end position="371"/>
    </location>
</feature>
<feature type="helix" evidence="15">
    <location>
        <begin position="373"/>
        <end position="378"/>
    </location>
</feature>
<feature type="strand" evidence="15">
    <location>
        <begin position="383"/>
        <end position="387"/>
    </location>
</feature>
<feature type="helix" evidence="15">
    <location>
        <begin position="388"/>
        <end position="402"/>
    </location>
</feature>
<feature type="helix" evidence="15">
    <location>
        <begin position="406"/>
        <end position="409"/>
    </location>
</feature>
<feature type="strand" evidence="15">
    <location>
        <begin position="422"/>
        <end position="427"/>
    </location>
</feature>
<feature type="strand" evidence="15">
    <location>
        <begin position="430"/>
        <end position="435"/>
    </location>
</feature>
<feature type="helix" evidence="15">
    <location>
        <begin position="442"/>
        <end position="455"/>
    </location>
</feature>
<sequence length="700" mass="77257">MGQTVNEDSMDVKKENQEKTPQSSTSSVQRDDFHWEEYLKETGSISAPSECFRQSQIPPVNDFKVGMKLEARDPRNATSVCIATVIGITGARLRLRLDGSDNRNDFWRLVDSPDIQPVGTCEKEGDLLQPPLGYQMNTSSWPMFLLKTLNGSEMASATLFKKEPPKPPLNNFKVGMKLEAIDKKNPYLICPATIGDVKGDEVHITFDGWSGAFDYWCKYDSRDIFPAGWCRLTGDVLQPPGTSVPIVKNIAKTESSPSEASQHSMQSPQKTTLILPTQQVRRSSRIKPPGPTAVPKRSSSVKNITPRKKGPNSGKKEKPLPVICSTSAASLKSLTRDRGMLYKDVASGPCKIVMSTVCVYVNKHGNFGPHLDPKRIQQLPDHFGPGPVNVVLRRIVQACVDCALETKTVFGYLKPDNRGGEVITASFDGETHSIQLPPVNSASFALRFLENFCHSLQCDNLLSSQPFSSSRGHTHSSAEHDKNQSAKEDVTERQSTKRSPQQTVPYVVPLSPKLPKTKEYASEGEPLFAGGSAIPKEENLSEDSKSSSLNSGNYLNPACRNPMYIHTSVSQDFSRSVPGTTSSPLVGDISPKSSPHEVKFQMQRKSEAPSYIAVPDPSVLKQGFSKDPSTWSVDEVIQFMKHTDPQISGPLADLFRQHEIDGKALFLLKSDVMMKYMGLKLGPALKLCYYIEKLKEGKYS</sequence>
<comment type="function">
    <text evidence="1">Putative Polycomb group (PcG) protein. PcG proteins act by forming multiprotein complexes, which are required to maintain the transcriptionally repressive state of homeotic genes throughout development (By similarity).</text>
</comment>
<comment type="interaction">
    <interactant intactId="EBI-2513111">
        <id>Q9UQR0</id>
    </interactant>
    <interactant intactId="EBI-1047244">
        <id>Q9H9S4</id>
        <label>CAB39L</label>
    </interactant>
    <organismsDiffer>false</organismsDiffer>
    <experiments>3</experiments>
</comment>
<comment type="interaction">
    <interactant intactId="EBI-2513111">
        <id>Q9UQR0</id>
    </interactant>
    <interactant intactId="EBI-375096">
        <id>P24941</id>
        <label>CDK2</label>
    </interactant>
    <organismsDiffer>false</organismsDiffer>
    <experiments>3</experiments>
</comment>
<comment type="interaction">
    <interactant intactId="EBI-2513111">
        <id>Q9UQR0</id>
    </interactant>
    <interactant intactId="EBI-739832">
        <id>Q8TBB1</id>
        <label>LNX1</label>
    </interactant>
    <organismsDiffer>false</organismsDiffer>
    <experiments>3</experiments>
</comment>
<comment type="interaction">
    <interactant intactId="EBI-2513111">
        <id>Q9UQR0</id>
    </interactant>
    <interactant intactId="EBI-713635">
        <id>O43639</id>
        <label>NCK2</label>
    </interactant>
    <organismsDiffer>false</organismsDiffer>
    <experiments>3</experiments>
</comment>
<comment type="interaction">
    <interactant intactId="EBI-2513111">
        <id>Q9UQR0</id>
    </interactant>
    <interactant intactId="EBI-2340927">
        <id>P78317</id>
        <label>RNF4</label>
    </interactant>
    <organismsDiffer>false</organismsDiffer>
    <experiments>3</experiments>
</comment>
<comment type="interaction">
    <interactant intactId="EBI-2513111">
        <id>Q9UQR0</id>
    </interactant>
    <interactant intactId="EBI-12025260">
        <id>Q5VUG0</id>
        <label>SFMBT2</label>
    </interactant>
    <organismsDiffer>false</organismsDiffer>
    <experiments>3</experiments>
</comment>
<comment type="interaction">
    <interactant intactId="EBI-2513111">
        <id>Q9UQR0</id>
    </interactant>
    <interactant intactId="EBI-17766455">
        <id>A0A286YEY3</id>
        <label>SRGAP2B</label>
    </interactant>
    <organismsDiffer>false</organismsDiffer>
    <experiments>3</experiments>
</comment>
<comment type="interaction">
    <interactant intactId="EBI-16087037">
        <id>Q9UQR0-1</id>
    </interactant>
    <interactant intactId="EBI-375096">
        <id>P24941</id>
        <label>CDK2</label>
    </interactant>
    <organismsDiffer>false</organismsDiffer>
    <experiments>7</experiments>
</comment>
<comment type="interaction">
    <interactant intactId="EBI-16087037">
        <id>Q9UQR0-1</id>
    </interactant>
    <interactant intactId="EBI-375077">
        <id>P38936</id>
        <label>CDKN1A</label>
    </interactant>
    <organismsDiffer>false</organismsDiffer>
    <experiments>3</experiments>
</comment>
<comment type="interaction">
    <interactant intactId="EBI-16087037">
        <id>Q9UQR0-1</id>
    </interactant>
    <interactant intactId="EBI-519280">
        <id>P46527</id>
        <label>CDKN1B</label>
    </interactant>
    <organismsDiffer>false</organismsDiffer>
    <experiments>2</experiments>
</comment>
<comment type="subcellular location">
    <subcellularLocation>
        <location evidence="5">Nucleus</location>
    </subcellularLocation>
</comment>
<comment type="alternative products">
    <event type="alternative splicing"/>
    <isoform>
        <id>Q9UQR0-1</id>
        <name>1</name>
        <sequence type="displayed"/>
    </isoform>
    <isoform>
        <id>Q9UQR0-2</id>
        <name>2</name>
        <sequence type="described" ref="VSP_010277"/>
    </isoform>
</comment>
<comment type="tissue specificity">
    <text evidence="3">Highly expressed in placenta, thymus and testis. Detected at lower levels in brain, liver, skeletal muscle, pancreas and ovary.</text>
</comment>
<comment type="similarity">
    <text evidence="5">Belongs to the SCM family.</text>
</comment>
<comment type="sequence caution" evidence="5">
    <conflict type="erroneous initiation">
        <sequence resource="EMBL-CDS" id="AAH51913"/>
    </conflict>
</comment>